<protein>
    <recommendedName>
        <fullName evidence="1">Small ribosomal subunit protein uS15</fullName>
    </recommendedName>
    <alternativeName>
        <fullName evidence="2">30S ribosomal protein S15</fullName>
    </alternativeName>
</protein>
<accession>Q6G9U0</accession>
<proteinExistence type="inferred from homology"/>
<evidence type="ECO:0000255" key="1">
    <source>
        <dbReference type="HAMAP-Rule" id="MF_01343"/>
    </source>
</evidence>
<evidence type="ECO:0000305" key="2"/>
<feature type="chain" id="PRO_0000115541" description="Small ribosomal subunit protein uS15">
    <location>
        <begin position="1"/>
        <end position="89"/>
    </location>
</feature>
<organism>
    <name type="scientific">Staphylococcus aureus (strain MSSA476)</name>
    <dbReference type="NCBI Taxonomy" id="282459"/>
    <lineage>
        <taxon>Bacteria</taxon>
        <taxon>Bacillati</taxon>
        <taxon>Bacillota</taxon>
        <taxon>Bacilli</taxon>
        <taxon>Bacillales</taxon>
        <taxon>Staphylococcaceae</taxon>
        <taxon>Staphylococcus</taxon>
    </lineage>
</organism>
<comment type="function">
    <text evidence="1">One of the primary rRNA binding proteins, it binds directly to 16S rRNA where it helps nucleate assembly of the platform of the 30S subunit by binding and bridging several RNA helices of the 16S rRNA.</text>
</comment>
<comment type="function">
    <text evidence="1">Forms an intersubunit bridge (bridge B4) with the 23S rRNA of the 50S subunit in the ribosome.</text>
</comment>
<comment type="subunit">
    <text evidence="1">Part of the 30S ribosomal subunit. Forms a bridge to the 50S subunit in the 70S ribosome, contacting the 23S rRNA.</text>
</comment>
<comment type="similarity">
    <text evidence="1">Belongs to the universal ribosomal protein uS15 family.</text>
</comment>
<reference key="1">
    <citation type="journal article" date="2004" name="Proc. Natl. Acad. Sci. U.S.A.">
        <title>Complete genomes of two clinical Staphylococcus aureus strains: evidence for the rapid evolution of virulence and drug resistance.</title>
        <authorList>
            <person name="Holden M.T.G."/>
            <person name="Feil E.J."/>
            <person name="Lindsay J.A."/>
            <person name="Peacock S.J."/>
            <person name="Day N.P.J."/>
            <person name="Enright M.C."/>
            <person name="Foster T.J."/>
            <person name="Moore C.E."/>
            <person name="Hurst L."/>
            <person name="Atkin R."/>
            <person name="Barron A."/>
            <person name="Bason N."/>
            <person name="Bentley S.D."/>
            <person name="Chillingworth C."/>
            <person name="Chillingworth T."/>
            <person name="Churcher C."/>
            <person name="Clark L."/>
            <person name="Corton C."/>
            <person name="Cronin A."/>
            <person name="Doggett J."/>
            <person name="Dowd L."/>
            <person name="Feltwell T."/>
            <person name="Hance Z."/>
            <person name="Harris B."/>
            <person name="Hauser H."/>
            <person name="Holroyd S."/>
            <person name="Jagels K."/>
            <person name="James K.D."/>
            <person name="Lennard N."/>
            <person name="Line A."/>
            <person name="Mayes R."/>
            <person name="Moule S."/>
            <person name="Mungall K."/>
            <person name="Ormond D."/>
            <person name="Quail M.A."/>
            <person name="Rabbinowitsch E."/>
            <person name="Rutherford K.M."/>
            <person name="Sanders M."/>
            <person name="Sharp S."/>
            <person name="Simmonds M."/>
            <person name="Stevens K."/>
            <person name="Whitehead S."/>
            <person name="Barrell B.G."/>
            <person name="Spratt B.G."/>
            <person name="Parkhill J."/>
        </authorList>
    </citation>
    <scope>NUCLEOTIDE SEQUENCE [LARGE SCALE GENOMIC DNA]</scope>
    <source>
        <strain>MSSA476</strain>
    </source>
</reference>
<keyword id="KW-0687">Ribonucleoprotein</keyword>
<keyword id="KW-0689">Ribosomal protein</keyword>
<keyword id="KW-0694">RNA-binding</keyword>
<keyword id="KW-0699">rRNA-binding</keyword>
<sequence length="89" mass="10608">MAISQERKNEIIKEYRVHETDTGSPEVQIAVLTAEINAVNEHLRTHKKDHHSRRGLLKMVGRRRHLLNYLRSKDIQRYRELIKSLGIRR</sequence>
<gene>
    <name evidence="1" type="primary">rpsO</name>
    <name type="ordered locus">SAS1207</name>
</gene>
<dbReference type="EMBL" id="BX571857">
    <property type="protein sequence ID" value="CAG42984.1"/>
    <property type="molecule type" value="Genomic_DNA"/>
</dbReference>
<dbReference type="RefSeq" id="WP_001018328.1">
    <property type="nucleotide sequence ID" value="NC_002953.3"/>
</dbReference>
<dbReference type="SMR" id="Q6G9U0"/>
<dbReference type="KEGG" id="sas:SAS1207"/>
<dbReference type="HOGENOM" id="CLU_148518_0_0_9"/>
<dbReference type="GO" id="GO:0022627">
    <property type="term" value="C:cytosolic small ribosomal subunit"/>
    <property type="evidence" value="ECO:0007669"/>
    <property type="project" value="TreeGrafter"/>
</dbReference>
<dbReference type="GO" id="GO:0019843">
    <property type="term" value="F:rRNA binding"/>
    <property type="evidence" value="ECO:0007669"/>
    <property type="project" value="UniProtKB-UniRule"/>
</dbReference>
<dbReference type="GO" id="GO:0003735">
    <property type="term" value="F:structural constituent of ribosome"/>
    <property type="evidence" value="ECO:0007669"/>
    <property type="project" value="InterPro"/>
</dbReference>
<dbReference type="GO" id="GO:0006412">
    <property type="term" value="P:translation"/>
    <property type="evidence" value="ECO:0007669"/>
    <property type="project" value="UniProtKB-UniRule"/>
</dbReference>
<dbReference type="CDD" id="cd00353">
    <property type="entry name" value="Ribosomal_S15p_S13e"/>
    <property type="match status" value="1"/>
</dbReference>
<dbReference type="FunFam" id="1.10.287.10:FF:000002">
    <property type="entry name" value="30S ribosomal protein S15"/>
    <property type="match status" value="1"/>
</dbReference>
<dbReference type="Gene3D" id="6.10.250.3130">
    <property type="match status" value="1"/>
</dbReference>
<dbReference type="Gene3D" id="1.10.287.10">
    <property type="entry name" value="S15/NS1, RNA-binding"/>
    <property type="match status" value="1"/>
</dbReference>
<dbReference type="HAMAP" id="MF_01343_B">
    <property type="entry name" value="Ribosomal_uS15_B"/>
    <property type="match status" value="1"/>
</dbReference>
<dbReference type="InterPro" id="IPR000589">
    <property type="entry name" value="Ribosomal_uS15"/>
</dbReference>
<dbReference type="InterPro" id="IPR005290">
    <property type="entry name" value="Ribosomal_uS15_bac-type"/>
</dbReference>
<dbReference type="InterPro" id="IPR009068">
    <property type="entry name" value="uS15_NS1_RNA-bd_sf"/>
</dbReference>
<dbReference type="NCBIfam" id="TIGR00952">
    <property type="entry name" value="S15_bact"/>
    <property type="match status" value="1"/>
</dbReference>
<dbReference type="PANTHER" id="PTHR23321">
    <property type="entry name" value="RIBOSOMAL PROTEIN S15, BACTERIAL AND ORGANELLAR"/>
    <property type="match status" value="1"/>
</dbReference>
<dbReference type="PANTHER" id="PTHR23321:SF26">
    <property type="entry name" value="SMALL RIBOSOMAL SUBUNIT PROTEIN US15M"/>
    <property type="match status" value="1"/>
</dbReference>
<dbReference type="Pfam" id="PF00312">
    <property type="entry name" value="Ribosomal_S15"/>
    <property type="match status" value="1"/>
</dbReference>
<dbReference type="SMART" id="SM01387">
    <property type="entry name" value="Ribosomal_S15"/>
    <property type="match status" value="1"/>
</dbReference>
<dbReference type="SUPFAM" id="SSF47060">
    <property type="entry name" value="S15/NS1 RNA-binding domain"/>
    <property type="match status" value="1"/>
</dbReference>
<dbReference type="PROSITE" id="PS00362">
    <property type="entry name" value="RIBOSOMAL_S15"/>
    <property type="match status" value="1"/>
</dbReference>
<name>RS15_STAAS</name>